<reference key="1">
    <citation type="journal article" date="1987" name="FEBS Lett.">
        <title>Cloning, nucleotide sequence and transfer of genes for the B800-850 light harvesting complex of Rhodobacter sphaeroides.</title>
        <authorList>
            <person name="Ashby M.K."/>
            <person name="Coomber S.A."/>
            <person name="Hunter C.N."/>
        </authorList>
    </citation>
    <scope>NUCLEOTIDE SEQUENCE [GENOMIC DNA]</scope>
</reference>
<reference key="2">
    <citation type="journal article" date="1989" name="J. Gen. Microbiol.">
        <title>Characterization and complementation of a mutant of Rhodobacter sphaeroides with a chromosomal deletion in the light-harvesting (LH2) genes.</title>
        <authorList>
            <person name="Burgess J.G."/>
            <person name="Ashby M.K."/>
            <person name="Hunter C.N."/>
        </authorList>
    </citation>
    <scope>NUCLEOTIDE SEQUENCE [GENOMIC DNA]</scope>
</reference>
<reference key="3">
    <citation type="journal article" date="1984" name="Hoppe-Seyler's Z. Physiol. Chem.">
        <title>The light-harvesting polypeptides of Rhodopseudomonas sphaeroides R-26.1. I. Isolation, purification and sequence analyses.</title>
        <authorList>
            <person name="Theiler R."/>
            <person name="Suter F."/>
            <person name="Wiemken V."/>
            <person name="Zuber H."/>
        </authorList>
    </citation>
    <scope>PROTEIN SEQUENCE OF 2-51</scope>
    <source>
        <strain>R-26.1</strain>
    </source>
</reference>
<sequence>MTDDLNKVWPSGLTVAEAEEVHKQLILGTRVFGGMALIAHFLAAAATPWLG</sequence>
<organism>
    <name type="scientific">Cereibacter sphaeroides</name>
    <name type="common">Rhodobacter sphaeroides</name>
    <dbReference type="NCBI Taxonomy" id="1063"/>
    <lineage>
        <taxon>Bacteria</taxon>
        <taxon>Pseudomonadati</taxon>
        <taxon>Pseudomonadota</taxon>
        <taxon>Alphaproteobacteria</taxon>
        <taxon>Rhodobacterales</taxon>
        <taxon>Paracoccaceae</taxon>
        <taxon>Cereibacter</taxon>
    </lineage>
</organism>
<protein>
    <recommendedName>
        <fullName>Light-harvesting protein B-800/850 beta chain</fullName>
    </recommendedName>
    <alternativeName>
        <fullName>Antenna pigment protein beta chain</fullName>
    </alternativeName>
    <alternativeName>
        <fullName>LH-3B</fullName>
    </alternativeName>
</protein>
<dbReference type="EMBL" id="X05200">
    <property type="protein sequence ID" value="CAA28832.1"/>
    <property type="molecule type" value="Genomic_DNA"/>
</dbReference>
<dbReference type="EMBL" id="M28360">
    <property type="protein sequence ID" value="AAA26130.1"/>
    <property type="molecule type" value="Genomic_DNA"/>
</dbReference>
<dbReference type="PIR" id="A26645">
    <property type="entry name" value="A26645"/>
</dbReference>
<dbReference type="PIR" id="B27087">
    <property type="entry name" value="LBRFBS"/>
</dbReference>
<dbReference type="SMR" id="P0C0Y2"/>
<dbReference type="OMA" id="AYIYTPW"/>
<dbReference type="GO" id="GO:0005886">
    <property type="term" value="C:plasma membrane"/>
    <property type="evidence" value="ECO:0007669"/>
    <property type="project" value="UniProtKB-SubCell"/>
</dbReference>
<dbReference type="GO" id="GO:0030077">
    <property type="term" value="C:plasma membrane light-harvesting complex"/>
    <property type="evidence" value="ECO:0007669"/>
    <property type="project" value="InterPro"/>
</dbReference>
<dbReference type="GO" id="GO:0042314">
    <property type="term" value="F:bacteriochlorophyll binding"/>
    <property type="evidence" value="ECO:0007669"/>
    <property type="project" value="UniProtKB-KW"/>
</dbReference>
<dbReference type="GO" id="GO:0045156">
    <property type="term" value="F:electron transporter, transferring electrons within the cyclic electron transport pathway of photosynthesis activity"/>
    <property type="evidence" value="ECO:0007669"/>
    <property type="project" value="InterPro"/>
</dbReference>
<dbReference type="GO" id="GO:0046872">
    <property type="term" value="F:metal ion binding"/>
    <property type="evidence" value="ECO:0007669"/>
    <property type="project" value="UniProtKB-KW"/>
</dbReference>
<dbReference type="GO" id="GO:0019684">
    <property type="term" value="P:photosynthesis, light reaction"/>
    <property type="evidence" value="ECO:0007669"/>
    <property type="project" value="InterPro"/>
</dbReference>
<dbReference type="Gene3D" id="1.20.5.250">
    <property type="match status" value="1"/>
</dbReference>
<dbReference type="InterPro" id="IPR000066">
    <property type="entry name" value="Antenna_a/b"/>
</dbReference>
<dbReference type="InterPro" id="IPR023623">
    <property type="entry name" value="Antenna_beta_CS"/>
</dbReference>
<dbReference type="InterPro" id="IPR023624">
    <property type="entry name" value="Antenna_beta_dom_sf"/>
</dbReference>
<dbReference type="InterPro" id="IPR002362">
    <property type="entry name" value="LHB-1/5"/>
</dbReference>
<dbReference type="InterPro" id="IPR035889">
    <property type="entry name" value="Light-harvesting_complex"/>
</dbReference>
<dbReference type="NCBIfam" id="NF040862">
    <property type="entry name" value="pufB_517_ASD"/>
    <property type="match status" value="1"/>
</dbReference>
<dbReference type="Pfam" id="PF00556">
    <property type="entry name" value="LHC"/>
    <property type="match status" value="1"/>
</dbReference>
<dbReference type="PIRSF" id="PIRSF002900">
    <property type="entry name" value="Antenna_beta"/>
    <property type="match status" value="1"/>
</dbReference>
<dbReference type="PRINTS" id="PR00674">
    <property type="entry name" value="LIGHTHARVSTB"/>
</dbReference>
<dbReference type="SUPFAM" id="SSF56918">
    <property type="entry name" value="Light-harvesting complex subunits"/>
    <property type="match status" value="1"/>
</dbReference>
<dbReference type="PROSITE" id="PS00969">
    <property type="entry name" value="ANTENNA_COMP_BETA"/>
    <property type="match status" value="1"/>
</dbReference>
<feature type="initiator methionine" description="Removed" evidence="2">
    <location>
        <position position="1"/>
    </location>
</feature>
<feature type="chain" id="PRO_0000099835" description="Light-harvesting protein B-800/850 beta chain">
    <location>
        <begin position="2"/>
        <end position="51"/>
    </location>
</feature>
<feature type="topological domain" description="Cytoplasmic" evidence="1">
    <location>
        <begin position="2"/>
        <end position="23"/>
    </location>
</feature>
<feature type="transmembrane region" description="Helical" evidence="1">
    <location>
        <begin position="24"/>
        <end position="46"/>
    </location>
</feature>
<feature type="topological domain" description="Periplasmic" evidence="1">
    <location>
        <begin position="47"/>
        <end position="51"/>
    </location>
</feature>
<feature type="binding site" description="axial binding residue" evidence="1">
    <location>
        <position position="22"/>
    </location>
    <ligand>
        <name>a bacteriochlorophyll</name>
        <dbReference type="ChEBI" id="CHEBI:38201"/>
    </ligand>
    <ligandPart>
        <name>Mg</name>
        <dbReference type="ChEBI" id="CHEBI:25107"/>
    </ligandPart>
</feature>
<feature type="binding site" description="axial binding residue" evidence="1">
    <location>
        <position position="40"/>
    </location>
    <ligand>
        <name>a bacteriochlorophyll</name>
        <dbReference type="ChEBI" id="CHEBI:38201"/>
    </ligand>
    <ligandPart>
        <name>Mg</name>
        <dbReference type="ChEBI" id="CHEBI:25107"/>
    </ligandPart>
</feature>
<feature type="sequence conflict" description="In Ref. 1; CAA28832." evidence="3" ref="1">
    <original>I</original>
    <variation>L</variation>
    <location>
        <position position="38"/>
    </location>
</feature>
<name>LHB2_CERSP</name>
<gene>
    <name type="primary">pucB</name>
</gene>
<keyword id="KW-0042">Antenna complex</keyword>
<keyword id="KW-0076">Bacteriochlorophyll</keyword>
<keyword id="KW-0997">Cell inner membrane</keyword>
<keyword id="KW-1003">Cell membrane</keyword>
<keyword id="KW-0148">Chlorophyll</keyword>
<keyword id="KW-0157">Chromophore</keyword>
<keyword id="KW-0903">Direct protein sequencing</keyword>
<keyword id="KW-0437">Light-harvesting polypeptide</keyword>
<keyword id="KW-0460">Magnesium</keyword>
<keyword id="KW-0472">Membrane</keyword>
<keyword id="KW-0479">Metal-binding</keyword>
<keyword id="KW-0812">Transmembrane</keyword>
<keyword id="KW-1133">Transmembrane helix</keyword>
<evidence type="ECO:0000255" key="1"/>
<evidence type="ECO:0000269" key="2">
    <source>
    </source>
</evidence>
<evidence type="ECO:0000305" key="3"/>
<accession>P0C0Y2</accession>
<accession>P02952</accession>
<proteinExistence type="evidence at protein level"/>
<comment type="function">
    <text>Antenna complexes are light-harvesting systems, which transfer the excitation energy to the reaction centers.</text>
</comment>
<comment type="subunit">
    <text>The core complex is formed by different alpha and beta chains, binding bacteriochlorophyll molecules, and arranged most probably in tetrameric structures disposed around the reaction center. The non-pigmented gamma chains may constitute additional components.</text>
</comment>
<comment type="subcellular location">
    <subcellularLocation>
        <location>Cell inner membrane</location>
        <topology>Single-pass type II membrane protein</topology>
    </subcellularLocation>
</comment>
<comment type="miscellaneous">
    <text>This polypeptide (LH-3B) and LH-2 constitute the B-800/850 complex of R.sphaeroides 2.4.1 and the spectrally altered B-850 complex isolated from the blue-green mutant R-27.1, which absorbs at 860 nM.</text>
</comment>
<comment type="similarity">
    <text evidence="3">Belongs to the antenna complex beta subunit family.</text>
</comment>